<dbReference type="EC" id="4.2.3.170" evidence="2 3"/>
<dbReference type="EMBL" id="CP001814">
    <property type="protein sequence ID" value="ACZ89572.1"/>
    <property type="molecule type" value="Genomic_DNA"/>
</dbReference>
<dbReference type="RefSeq" id="WP_012893303.1">
    <property type="nucleotide sequence ID" value="NC_013595.1"/>
</dbReference>
<dbReference type="SMR" id="D2B747"/>
<dbReference type="STRING" id="479432.Sros_6866"/>
<dbReference type="KEGG" id="sro:Sros_6866"/>
<dbReference type="eggNOG" id="COG0664">
    <property type="taxonomic scope" value="Bacteria"/>
</dbReference>
<dbReference type="HOGENOM" id="CLU_042538_4_2_11"/>
<dbReference type="UniPathway" id="UPA00213"/>
<dbReference type="Proteomes" id="UP000002029">
    <property type="component" value="Chromosome"/>
</dbReference>
<dbReference type="GO" id="GO:0046872">
    <property type="term" value="F:metal ion binding"/>
    <property type="evidence" value="ECO:0007669"/>
    <property type="project" value="UniProtKB-KW"/>
</dbReference>
<dbReference type="GO" id="GO:0010333">
    <property type="term" value="F:terpene synthase activity"/>
    <property type="evidence" value="ECO:0007669"/>
    <property type="project" value="InterPro"/>
</dbReference>
<dbReference type="GO" id="GO:0016114">
    <property type="term" value="P:terpenoid biosynthetic process"/>
    <property type="evidence" value="ECO:0007669"/>
    <property type="project" value="UniProtKB-UniPathway"/>
</dbReference>
<dbReference type="Gene3D" id="1.10.600.10">
    <property type="entry name" value="Farnesyl Diphosphate Synthase"/>
    <property type="match status" value="1"/>
</dbReference>
<dbReference type="InterPro" id="IPR054966">
    <property type="entry name" value="epi-cubol_syn"/>
</dbReference>
<dbReference type="InterPro" id="IPR008949">
    <property type="entry name" value="Isoprenoid_synthase_dom_sf"/>
</dbReference>
<dbReference type="InterPro" id="IPR034686">
    <property type="entry name" value="Terpene_cyclase-like_2"/>
</dbReference>
<dbReference type="NCBIfam" id="NF042951">
    <property type="entry name" value="epi-cubol_syn"/>
    <property type="match status" value="1"/>
</dbReference>
<dbReference type="PANTHER" id="PTHR35201:SF4">
    <property type="entry name" value="BETA-PINACENE SYNTHASE-RELATED"/>
    <property type="match status" value="1"/>
</dbReference>
<dbReference type="PANTHER" id="PTHR35201">
    <property type="entry name" value="TERPENE SYNTHASE"/>
    <property type="match status" value="1"/>
</dbReference>
<dbReference type="Pfam" id="PF19086">
    <property type="entry name" value="Terpene_syn_C_2"/>
    <property type="match status" value="1"/>
</dbReference>
<dbReference type="SFLD" id="SFLDS00005">
    <property type="entry name" value="Isoprenoid_Synthase_Type_I"/>
    <property type="match status" value="1"/>
</dbReference>
<dbReference type="SFLD" id="SFLDG01020">
    <property type="entry name" value="Terpene_Cyclase_Like_2"/>
    <property type="match status" value="1"/>
</dbReference>
<dbReference type="SUPFAM" id="SSF48576">
    <property type="entry name" value="Terpenoid synthases"/>
    <property type="match status" value="1"/>
</dbReference>
<organism>
    <name type="scientific">Streptosporangium roseum (strain ATCC 12428 / DSM 43021 / JCM 3005 / KCTC 9067 / NCIMB 10171 / NRRL 2505 / NI 9100)</name>
    <dbReference type="NCBI Taxonomy" id="479432"/>
    <lineage>
        <taxon>Bacteria</taxon>
        <taxon>Bacillati</taxon>
        <taxon>Actinomycetota</taxon>
        <taxon>Actinomycetes</taxon>
        <taxon>Streptosporangiales</taxon>
        <taxon>Streptosporangiaceae</taxon>
        <taxon>Streptosporangium</taxon>
    </lineage>
</organism>
<name>ECUB_STRRD</name>
<proteinExistence type="evidence at protein level"/>
<evidence type="ECO:0000250" key="1">
    <source>
        <dbReference type="UniProtKB" id="B5HDJ6"/>
    </source>
</evidence>
<evidence type="ECO:0000269" key="2">
    <source>
    </source>
</evidence>
<evidence type="ECO:0000269" key="3">
    <source>
    </source>
</evidence>
<evidence type="ECO:0000303" key="4">
    <source>
    </source>
</evidence>
<evidence type="ECO:0000305" key="5"/>
<evidence type="ECO:0000305" key="6">
    <source>
    </source>
</evidence>
<evidence type="ECO:0000312" key="7">
    <source>
        <dbReference type="EMBL" id="ACZ89572.1"/>
    </source>
</evidence>
<evidence type="ECO:0000312" key="8">
    <source>
        <dbReference type="Proteomes" id="UP000002029"/>
    </source>
</evidence>
<reference key="1">
    <citation type="journal article" date="2010" name="Stand. Genomic Sci.">
        <title>Complete genome sequence of Streptosporangium roseum type strain (NI 9100).</title>
        <authorList>
            <person name="Nolan M."/>
            <person name="Sikorski J."/>
            <person name="Jando M."/>
            <person name="Lucas S."/>
            <person name="Lapidus A."/>
            <person name="Glavina Del Rio T."/>
            <person name="Chen F."/>
            <person name="Tice H."/>
            <person name="Pitluck S."/>
            <person name="Cheng J.F."/>
            <person name="Chertkov O."/>
            <person name="Sims D."/>
            <person name="Meincke L."/>
            <person name="Brettin T."/>
            <person name="Han C."/>
            <person name="Detter J.C."/>
            <person name="Bruce D."/>
            <person name="Goodwin L."/>
            <person name="Land M."/>
            <person name="Hauser L."/>
            <person name="Chang Y.J."/>
            <person name="Jeffries C.D."/>
            <person name="Ivanova N."/>
            <person name="Mavromatis K."/>
            <person name="Mikhailova N."/>
            <person name="Chen A."/>
            <person name="Palaniappan K."/>
            <person name="Chain P."/>
            <person name="Rohde M."/>
            <person name="Goker M."/>
            <person name="Bristow J."/>
            <person name="Eisen J.A."/>
            <person name="Markowitz V."/>
            <person name="Hugenholtz P."/>
            <person name="Kyrpides N.C."/>
            <person name="Klenk H.P."/>
        </authorList>
    </citation>
    <scope>NUCLEOTIDE SEQUENCE [LARGE SCALE GENOMIC DNA]</scope>
    <source>
        <strain evidence="8">ATCC 12428 / DSM 43021 / JCM 3005 / KCTC 9067 / NCIMB 10171 / NRRL 2505 / NI 9100</strain>
    </source>
</reference>
<reference key="2">
    <citation type="journal article" date="2016" name="Angew. Chem. Int. Ed.">
        <title>Lessons from 1,3-hydride shifts in sesquiterpene cyclizations.</title>
        <authorList>
            <person name="Rinkel J."/>
            <person name="Rabe P."/>
            <person name="Garbeva P."/>
            <person name="Dickschat J.S."/>
        </authorList>
    </citation>
    <scope>FUNCTION</scope>
    <scope>CATALYTIC ACTIVITY</scope>
    <scope>REACTION MECHANISM</scope>
    <source>
        <strain>ATCC 12428 / DSM 43021 / JCM 3005 / KCTC 9067 / NCIMB 10171 / NRRL 2505 / NI 9100</strain>
    </source>
</reference>
<reference key="3">
    <citation type="journal article" date="2016" name="Beilstein J. Org. Chem.">
        <title>Mechanistic investigations on six bacterial terpene cyclases.</title>
        <authorList>
            <person name="Rabe P."/>
            <person name="Schmitz T."/>
            <person name="Dickschat J.S."/>
        </authorList>
    </citation>
    <scope>FUNCTION</scope>
    <scope>CATALYTIC ACTIVITY</scope>
    <scope>SUBSTRATE SPECIFICITY</scope>
    <scope>DOMAIN</scope>
    <scope>PATHWAY</scope>
    <source>
        <strain>ATCC 12428 / DSM 43021 / JCM 3005 / KCTC 9067 / NCIMB 10171 / NRRL 2505 / NI 9100</strain>
    </source>
</reference>
<feature type="chain" id="PRO_0000443245" description="4-epi-cubebol synthase ((2E,6E)-farnesyl diphosphate cyclizing)">
    <location>
        <begin position="1"/>
        <end position="330"/>
    </location>
</feature>
<feature type="short sequence motif" description="DDXXXE motif" evidence="6">
    <location>
        <begin position="91"/>
        <end position="96"/>
    </location>
</feature>
<feature type="binding site" evidence="1">
    <location>
        <position position="91"/>
    </location>
    <ligand>
        <name>Mg(2+)</name>
        <dbReference type="ChEBI" id="CHEBI:18420"/>
        <label>1</label>
    </ligand>
</feature>
<feature type="binding site" evidence="1">
    <location>
        <position position="96"/>
    </location>
    <ligand>
        <name>Mg(2+)</name>
        <dbReference type="ChEBI" id="CHEBI:18420"/>
        <label>1</label>
    </ligand>
</feature>
<feature type="binding site" evidence="1">
    <location>
        <position position="96"/>
    </location>
    <ligand>
        <name>Mg(2+)</name>
        <dbReference type="ChEBI" id="CHEBI:18420"/>
        <label>2</label>
    </ligand>
</feature>
<feature type="binding site" evidence="1">
    <location>
        <position position="184"/>
    </location>
    <ligand>
        <name>substrate</name>
    </ligand>
</feature>
<feature type="binding site" evidence="1">
    <location>
        <position position="230"/>
    </location>
    <ligand>
        <name>Mg(2+)</name>
        <dbReference type="ChEBI" id="CHEBI:18420"/>
        <label>3</label>
    </ligand>
</feature>
<feature type="binding site" evidence="1">
    <location>
        <position position="234"/>
    </location>
    <ligand>
        <name>Mg(2+)</name>
        <dbReference type="ChEBI" id="CHEBI:18420"/>
        <label>3</label>
    </ligand>
</feature>
<feature type="binding site" evidence="1">
    <location>
        <position position="237"/>
    </location>
    <ligand>
        <name>substrate</name>
    </ligand>
</feature>
<feature type="binding site" evidence="1">
    <location>
        <position position="238"/>
    </location>
    <ligand>
        <name>Mg(2+)</name>
        <dbReference type="ChEBI" id="CHEBI:18420"/>
        <label>3</label>
    </ligand>
</feature>
<feature type="binding site" evidence="1">
    <location>
        <begin position="316"/>
        <end position="317"/>
    </location>
    <ligand>
        <name>substrate</name>
    </ligand>
</feature>
<feature type="site" description="Plays a critical role in the stabilization of intermediate cation" evidence="1">
    <location>
        <position position="88"/>
    </location>
</feature>
<feature type="site" description="Plays a critical role for substrate recognition" evidence="1">
    <location>
        <position position="92"/>
    </location>
</feature>
<feature type="site" description="Plays a critical role for substrate recognition" evidence="1">
    <location>
        <position position="165"/>
    </location>
</feature>
<feature type="site" description="Plays a critical role for abstraction of the pyrophosphate group" evidence="1">
    <location>
        <position position="188"/>
    </location>
</feature>
<keyword id="KW-0456">Lyase</keyword>
<keyword id="KW-0460">Magnesium</keyword>
<keyword id="KW-0479">Metal-binding</keyword>
<keyword id="KW-1185">Reference proteome</keyword>
<gene>
    <name evidence="7" type="ordered locus">Sros_6866</name>
</gene>
<accession>D2B747</accession>
<protein>
    <recommendedName>
        <fullName evidence="4">4-epi-cubebol synthase ((2E,6E)-farnesyl diphosphate cyclizing)</fullName>
        <ecNumber evidence="2 3">4.2.3.170</ecNumber>
    </recommendedName>
    <alternativeName>
        <fullName evidence="4">Terpene synthase</fullName>
    </alternativeName>
    <alternativeName>
        <fullName evidence="4">Type I terpene cyclase</fullName>
    </alternativeName>
</protein>
<sequence>MGTTTTHKFDRPLRLPPLPCPFPSEVNPYVEQVDKETLEWLIDSEMLDDAETVERYRQAKYGWLSARTYPYAEHHTLRLVSDWCVWLFAFDDAFCESDRRAAEIARALPQLYAVLEDLDVGSEVDDVFAKSLLEIKGRIAAYGDDEQLDRWRNVTKDYLFAQVWEAANREDEVVPSLEDYIFMRRRTGAMLTVFALIDVASGRSLSADEWRHPGMRAITESANDVVVWDNDLISYAKESNSGNSRNNLVNVLAEHRHYSRQEAMEEIGEMRNQAIADMVAVRPSLEALGSDAVLAYVRGLEFWISGSVDYSLTSSRYTDAWRTARQPSIR</sequence>
<comment type="function">
    <text evidence="2 3">Catalyzes the conversion of (2E,6E)-farnesyl diphosphate (FPP) to yield the bicyclic sesquiterpenol 4-epi-cubebol via a 1,10-cyclization, which requires the abstraction of the pyrophosphate from FPP to yield a (E,E)-germacradienyl cation (PubMed:27666571, PubMed:27829890). The only accepted substrate is (2E,6E)-farnesyl diphosphate (FPP) (PubMed:27829890).</text>
</comment>
<comment type="catalytic activity">
    <reaction evidence="2 3">
        <text>(2E,6E)-farnesyl diphosphate + H2O = 4-epi-cubebol + diphosphate</text>
        <dbReference type="Rhea" id="RHEA:54048"/>
        <dbReference type="ChEBI" id="CHEBI:15377"/>
        <dbReference type="ChEBI" id="CHEBI:33019"/>
        <dbReference type="ChEBI" id="CHEBI:138041"/>
        <dbReference type="ChEBI" id="CHEBI:175763"/>
        <dbReference type="EC" id="4.2.3.170"/>
    </reaction>
</comment>
<comment type="cofactor">
    <cofactor evidence="1">
        <name>Mg(2+)</name>
        <dbReference type="ChEBI" id="CHEBI:18420"/>
    </cofactor>
    <text evidence="1">Binds 3 Mg(2+) ions per subunit.</text>
</comment>
<comment type="pathway">
    <text evidence="6">Secondary metabolite biosynthesis; terpenoid biosynthesis.</text>
</comment>
<comment type="domain">
    <text evidence="6">The Asp-Asp-Xaa-Xaa-Xaa-Glu (DDXXXE) motif is important for the catalytic activity, presumably through binding to Mg(2+).</text>
</comment>
<comment type="similarity">
    <text evidence="5">Belongs to the terpene synthase family.</text>
</comment>